<comment type="function">
    <text evidence="1">May play a role in mitochondrial aerobic respiration. May also regulate mitochondrial organization and fission (By similarity).</text>
</comment>
<comment type="subcellular location">
    <subcellularLocation>
        <location evidence="1">Mitochondrion</location>
    </subcellularLocation>
    <text evidence="1">May be associated with the inner and the outer mitochondrial membrane.</text>
</comment>
<comment type="similarity">
    <text evidence="5">Belongs to the MTFR1 family.</text>
</comment>
<reference key="1">
    <citation type="submission" date="2004-11" db="EMBL/GenBank/DDBJ databases">
        <authorList>
            <consortium name="The German cDNA consortium"/>
        </authorList>
    </citation>
    <scope>NUCLEOTIDE SEQUENCE [LARGE SCALE MRNA]</scope>
    <source>
        <tissue>Kidney</tissue>
    </source>
</reference>
<protein>
    <recommendedName>
        <fullName>Mitochondrial fission regulator 1</fullName>
    </recommendedName>
</protein>
<organism>
    <name type="scientific">Pongo abelii</name>
    <name type="common">Sumatran orangutan</name>
    <name type="synonym">Pongo pygmaeus abelii</name>
    <dbReference type="NCBI Taxonomy" id="9601"/>
    <lineage>
        <taxon>Eukaryota</taxon>
        <taxon>Metazoa</taxon>
        <taxon>Chordata</taxon>
        <taxon>Craniata</taxon>
        <taxon>Vertebrata</taxon>
        <taxon>Euteleostomi</taxon>
        <taxon>Mammalia</taxon>
        <taxon>Eutheria</taxon>
        <taxon>Euarchontoglires</taxon>
        <taxon>Primates</taxon>
        <taxon>Haplorrhini</taxon>
        <taxon>Catarrhini</taxon>
        <taxon>Hominidae</taxon>
        <taxon>Pongo</taxon>
    </lineage>
</organism>
<name>MTFR1_PONAB</name>
<sequence length="333" mass="37018">MLGWIKRLIRMVFQQVGVSMQSVLWSRKPYGSSRSIVRKIGTNLSLIQCPRVQFQINSHATEWSPSHPGEDAVASFADVGWVAKEEGECSARLRTEVRSRPPLQDDLLFFEKAPSRQISLPDFSQEEPQLKTPALANEEALQKICALENELAALRAQIAKIVTQQEQQNLTAGDLDSTTFGTIPPHPLPPPPPPPPPPLGLHQSISAVDLIKERREKRANAGKTLVKNSPKKPEMPNMLEILKDMNSVKLRSVKRSEQDVKPKPVDATDPAALIAEALKKKFAYRYRSDSQDEVEKGVPKSESEATSERVLFGPHMLKPTGKMKALIENVSDS</sequence>
<gene>
    <name type="primary">MTFR1</name>
</gene>
<keyword id="KW-0496">Mitochondrion</keyword>
<keyword id="KW-0597">Phosphoprotein</keyword>
<keyword id="KW-1185">Reference proteome</keyword>
<keyword id="KW-0809">Transit peptide</keyword>
<proteinExistence type="evidence at transcript level"/>
<feature type="transit peptide" description="Mitochondrion" evidence="3">
    <location>
        <begin position="1"/>
        <end status="unknown"/>
    </location>
</feature>
<feature type="chain" id="PRO_0000096624" description="Mitochondrial fission regulator 1">
    <location>
        <begin status="unknown"/>
        <end position="333"/>
    </location>
</feature>
<feature type="region of interest" description="Disordered" evidence="4">
    <location>
        <begin position="286"/>
        <end position="315"/>
    </location>
</feature>
<feature type="compositionally biased region" description="Basic and acidic residues" evidence="4">
    <location>
        <begin position="286"/>
        <end position="307"/>
    </location>
</feature>
<feature type="modified residue" description="Phosphoserine" evidence="2">
    <location>
        <position position="119"/>
    </location>
</feature>
<accession>Q5RFN3</accession>
<evidence type="ECO:0000250" key="1"/>
<evidence type="ECO:0000250" key="2">
    <source>
        <dbReference type="UniProtKB" id="Q15390"/>
    </source>
</evidence>
<evidence type="ECO:0000255" key="3"/>
<evidence type="ECO:0000256" key="4">
    <source>
        <dbReference type="SAM" id="MobiDB-lite"/>
    </source>
</evidence>
<evidence type="ECO:0000305" key="5"/>
<dbReference type="EMBL" id="CR857120">
    <property type="protein sequence ID" value="CAH89424.1"/>
    <property type="molecule type" value="mRNA"/>
</dbReference>
<dbReference type="RefSeq" id="NP_001124603.1">
    <property type="nucleotide sequence ID" value="NM_001131131.2"/>
</dbReference>
<dbReference type="RefSeq" id="XP_054416782.1">
    <property type="nucleotide sequence ID" value="XM_054560807.2"/>
</dbReference>
<dbReference type="RefSeq" id="XP_054416783.1">
    <property type="nucleotide sequence ID" value="XM_054560808.2"/>
</dbReference>
<dbReference type="RefSeq" id="XP_054416784.1">
    <property type="nucleotide sequence ID" value="XM_054560809.2"/>
</dbReference>
<dbReference type="RefSeq" id="XP_054416785.1">
    <property type="nucleotide sequence ID" value="XM_054560810.2"/>
</dbReference>
<dbReference type="RefSeq" id="XP_054416786.1">
    <property type="nucleotide sequence ID" value="XM_054560811.2"/>
</dbReference>
<dbReference type="SMR" id="Q5RFN3"/>
<dbReference type="FunCoup" id="Q5RFN3">
    <property type="interactions" value="1252"/>
</dbReference>
<dbReference type="STRING" id="9601.ENSPPYP00000020897"/>
<dbReference type="Ensembl" id="ENSPPYT00000021731.2">
    <property type="protein sequence ID" value="ENSPPYP00000020897.1"/>
    <property type="gene ID" value="ENSPPYG00000018631.3"/>
</dbReference>
<dbReference type="GeneID" id="100171440"/>
<dbReference type="KEGG" id="pon:100171440"/>
<dbReference type="CTD" id="9650"/>
<dbReference type="eggNOG" id="ENOG502QSSN">
    <property type="taxonomic scope" value="Eukaryota"/>
</dbReference>
<dbReference type="GeneTree" id="ENSGT00950000183215"/>
<dbReference type="HOGENOM" id="CLU_059135_0_0_1"/>
<dbReference type="InParanoid" id="Q5RFN3"/>
<dbReference type="OrthoDB" id="2133332at2759"/>
<dbReference type="TreeFam" id="TF331404"/>
<dbReference type="Proteomes" id="UP000001595">
    <property type="component" value="Chromosome 8"/>
</dbReference>
<dbReference type="GO" id="GO:0005739">
    <property type="term" value="C:mitochondrion"/>
    <property type="evidence" value="ECO:0000250"/>
    <property type="project" value="UniProtKB"/>
</dbReference>
<dbReference type="GO" id="GO:0009060">
    <property type="term" value="P:aerobic respiration"/>
    <property type="evidence" value="ECO:0000250"/>
    <property type="project" value="UniProtKB"/>
</dbReference>
<dbReference type="GO" id="GO:0000266">
    <property type="term" value="P:mitochondrial fission"/>
    <property type="evidence" value="ECO:0000250"/>
    <property type="project" value="UniProtKB"/>
</dbReference>
<dbReference type="GO" id="GO:0007005">
    <property type="term" value="P:mitochondrion organization"/>
    <property type="evidence" value="ECO:0000250"/>
    <property type="project" value="UniProtKB"/>
</dbReference>
<dbReference type="InterPro" id="IPR007972">
    <property type="entry name" value="Mtfr1"/>
</dbReference>
<dbReference type="PANTHER" id="PTHR14215:SF1">
    <property type="entry name" value="MITOCHONDRIAL FISSION REGULATOR 1"/>
    <property type="match status" value="1"/>
</dbReference>
<dbReference type="PANTHER" id="PTHR14215">
    <property type="entry name" value="PROTEIN OF UNKNOWN FUNCTION DUF729"/>
    <property type="match status" value="1"/>
</dbReference>
<dbReference type="Pfam" id="PF05308">
    <property type="entry name" value="Mito_fiss_reg"/>
    <property type="match status" value="1"/>
</dbReference>